<evidence type="ECO:0000255" key="1"/>
<evidence type="ECO:0000255" key="2">
    <source>
        <dbReference type="PROSITE-ProRule" id="PRU00720"/>
    </source>
</evidence>
<evidence type="ECO:0000255" key="3">
    <source>
        <dbReference type="PROSITE-ProRule" id="PRU01055"/>
    </source>
</evidence>
<evidence type="ECO:0000269" key="4">
    <source>
    </source>
</evidence>
<evidence type="ECO:0000269" key="5">
    <source>
    </source>
</evidence>
<reference key="1">
    <citation type="journal article" date="1995" name="J. Interferon Cytokine Res.">
        <title>Characterization of a rainbow trout Mx gene.</title>
        <authorList>
            <person name="Trobridge G.D."/>
            <person name="Leong J.-A."/>
        </authorList>
    </citation>
    <scope>NUCLEOTIDE SEQUENCE [MRNA]</scope>
    <source>
        <tissue>Gonad</tissue>
    </source>
</reference>
<reference key="2">
    <citation type="journal article" date="1997" name="J. Virol.">
        <title>Cloning of the rainbow trout (Oncorhynchus mykiss) Mx2 and Mx3 cDNAs and characterization of trout Mx protein expression in salmon cells.</title>
        <authorList>
            <person name="Trobridge G.D."/>
            <person name="Chiou P.P."/>
            <person name="Leong J.A."/>
        </authorList>
    </citation>
    <scope>FUNCTION</scope>
    <scope>SUBCELLULAR LOCATION</scope>
</reference>
<reference key="3">
    <citation type="journal article" date="2007" name="Fish Shellfish Immunol.">
        <title>In vitro and in vivo differential expression of rainbow trout (Oncorhynchus mykiss) Mx isoforms in response to viral haemorrhagic septicaemia virus (VHSV) G gene, poly I:C and VHSV.</title>
        <authorList>
            <person name="Tafalla C."/>
            <person name="Chico V."/>
            <person name="Perez L."/>
            <person name="Coll J.M."/>
            <person name="Estepa A."/>
        </authorList>
    </citation>
    <scope>INDUCTION</scope>
</reference>
<sequence>MNNTLNQHYEEKVRPCIDLIDSLRSLGVEKDLALPAIAVIGDQSSGKSSVLEALSGVALPRGSGIVTRCPLELKMKRKKEGEEWHGKISYQDHEEEIEDPSDVEKKIREAQDEMAGVGVGISDDLISLEIGSPDVPDLTLIDLPGIARVAVKGQPENIGEQIKRLIRKFIMKQETISLVVVPCNVDIATTEALKMAQEVDPEGERTLGILTKPDLVDKGTEETVVDIVHNEVIHLTKGYMIVKCRGQKEIMERVSLTEATEREKAFFKEHAHLSTLYDEGHATIPKLAEKLTLELVHHIEKSLPRLEEQIEAKLSETHAELERYGTGPPEDSAERLYFLIDKVTAFTQDAINLSTGEEMKSGVRLNVFSTLRKEFGKWKLHLERSGEIFNQRIEGEVDDYEKTYRGRELPGFINYKTFEVMVKDQIKQLEGPAVKKLKEISDAVRKVFLLLAQSSFTGFPNLLKSAKTKIEAIKQVNESTAESMLRTQFKMELIVYTQDSTYSHSLCERKREEDEDQPLTEIRSTIFSTDNHATLQEMMLHLKSYYWISSQRLADQIPMVIRYLVLQEFASQLQREMLQTLQEKDNIEQLLKEDIDIGSKRAALQSKLKRLMKARSYLVEF</sequence>
<protein>
    <recommendedName>
        <fullName>Interferon-induced GTP-binding protein Mx1</fullName>
        <shortName>RBTMx1</shortName>
    </recommendedName>
    <alternativeName>
        <fullName>Interferon-inducible Mx protein 1</fullName>
    </alternativeName>
</protein>
<comment type="function">
    <text evidence="5">Does not inhibit strain RB-1 of the fish pathogen, infectious hematopoietic necrosis virus (IHNV).</text>
</comment>
<comment type="subcellular location">
    <subcellularLocation>
        <location evidence="5">Cytoplasm</location>
    </subcellularLocation>
    <text>Exhibits cytoplasmic staining in a large globular pattern surrounding the nucleus.</text>
</comment>
<comment type="induction">
    <text evidence="4">By polyinosinic-polycytidylic acid (poly I:C) and viral haemorrhagic septicaemia virus (VHSV) strain 07.71 in muscle, head kidney, spleen and liver.</text>
</comment>
<comment type="similarity">
    <text evidence="3">Belongs to the TRAFAC class dynamin-like GTPase superfamily. Dynamin/Fzo/YdjA family.</text>
</comment>
<dbReference type="EMBL" id="U30253">
    <property type="protein sequence ID" value="AAA87839.1"/>
    <property type="molecule type" value="mRNA"/>
</dbReference>
<dbReference type="RefSeq" id="NP_001165372.1">
    <property type="nucleotide sequence ID" value="NM_001171901.1"/>
</dbReference>
<dbReference type="SMR" id="Q91192"/>
<dbReference type="GeneID" id="100335041"/>
<dbReference type="KEGG" id="omy:100335041"/>
<dbReference type="CTD" id="100335041"/>
<dbReference type="OrthoDB" id="5061070at2759"/>
<dbReference type="Proteomes" id="UP000694395">
    <property type="component" value="Unplaced"/>
</dbReference>
<dbReference type="GO" id="GO:0005874">
    <property type="term" value="C:microtubule"/>
    <property type="evidence" value="ECO:0007669"/>
    <property type="project" value="TreeGrafter"/>
</dbReference>
<dbReference type="GO" id="GO:0005634">
    <property type="term" value="C:nucleus"/>
    <property type="evidence" value="ECO:0007669"/>
    <property type="project" value="TreeGrafter"/>
</dbReference>
<dbReference type="GO" id="GO:0048471">
    <property type="term" value="C:perinuclear region of cytoplasm"/>
    <property type="evidence" value="ECO:0000315"/>
    <property type="project" value="AgBase"/>
</dbReference>
<dbReference type="GO" id="GO:0005886">
    <property type="term" value="C:plasma membrane"/>
    <property type="evidence" value="ECO:0007669"/>
    <property type="project" value="TreeGrafter"/>
</dbReference>
<dbReference type="GO" id="GO:0098793">
    <property type="term" value="C:presynapse"/>
    <property type="evidence" value="ECO:0007669"/>
    <property type="project" value="GOC"/>
</dbReference>
<dbReference type="GO" id="GO:0005525">
    <property type="term" value="F:GTP binding"/>
    <property type="evidence" value="ECO:0007669"/>
    <property type="project" value="UniProtKB-KW"/>
</dbReference>
<dbReference type="GO" id="GO:0003924">
    <property type="term" value="F:GTPase activity"/>
    <property type="evidence" value="ECO:0007669"/>
    <property type="project" value="InterPro"/>
</dbReference>
<dbReference type="GO" id="GO:0008017">
    <property type="term" value="F:microtubule binding"/>
    <property type="evidence" value="ECO:0007669"/>
    <property type="project" value="TreeGrafter"/>
</dbReference>
<dbReference type="GO" id="GO:0051607">
    <property type="term" value="P:defense response to virus"/>
    <property type="evidence" value="ECO:0007669"/>
    <property type="project" value="TreeGrafter"/>
</dbReference>
<dbReference type="GO" id="GO:0031623">
    <property type="term" value="P:receptor internalization"/>
    <property type="evidence" value="ECO:0007669"/>
    <property type="project" value="TreeGrafter"/>
</dbReference>
<dbReference type="GO" id="GO:0034340">
    <property type="term" value="P:response to type I interferon"/>
    <property type="evidence" value="ECO:0000250"/>
    <property type="project" value="AgBase"/>
</dbReference>
<dbReference type="GO" id="GO:0016185">
    <property type="term" value="P:synaptic vesicle budding from presynaptic endocytic zone membrane"/>
    <property type="evidence" value="ECO:0007669"/>
    <property type="project" value="TreeGrafter"/>
</dbReference>
<dbReference type="CDD" id="cd08771">
    <property type="entry name" value="DLP_1"/>
    <property type="match status" value="1"/>
</dbReference>
<dbReference type="FunFam" id="1.20.120.1240:FF:000007">
    <property type="entry name" value="Interferon-induced GTP-binding protein Mx1"/>
    <property type="match status" value="1"/>
</dbReference>
<dbReference type="FunFam" id="3.40.50.300:FF:000621">
    <property type="entry name" value="Interferon-induced GTP-binding protein Mx1"/>
    <property type="match status" value="1"/>
</dbReference>
<dbReference type="Gene3D" id="1.20.120.1240">
    <property type="entry name" value="Dynamin, middle domain"/>
    <property type="match status" value="1"/>
</dbReference>
<dbReference type="Gene3D" id="3.40.50.300">
    <property type="entry name" value="P-loop containing nucleotide triphosphate hydrolases"/>
    <property type="match status" value="1"/>
</dbReference>
<dbReference type="InterPro" id="IPR022812">
    <property type="entry name" value="Dynamin"/>
</dbReference>
<dbReference type="InterPro" id="IPR001401">
    <property type="entry name" value="Dynamin_GTPase"/>
</dbReference>
<dbReference type="InterPro" id="IPR019762">
    <property type="entry name" value="Dynamin_GTPase_CS"/>
</dbReference>
<dbReference type="InterPro" id="IPR045063">
    <property type="entry name" value="Dynamin_N"/>
</dbReference>
<dbReference type="InterPro" id="IPR000375">
    <property type="entry name" value="Dynamin_stalk"/>
</dbReference>
<dbReference type="InterPro" id="IPR030381">
    <property type="entry name" value="G_DYNAMIN_dom"/>
</dbReference>
<dbReference type="InterPro" id="IPR003130">
    <property type="entry name" value="GED"/>
</dbReference>
<dbReference type="InterPro" id="IPR020850">
    <property type="entry name" value="GED_dom"/>
</dbReference>
<dbReference type="InterPro" id="IPR027417">
    <property type="entry name" value="P-loop_NTPase"/>
</dbReference>
<dbReference type="PANTHER" id="PTHR11566">
    <property type="entry name" value="DYNAMIN"/>
    <property type="match status" value="1"/>
</dbReference>
<dbReference type="PANTHER" id="PTHR11566:SF225">
    <property type="entry name" value="INTERFERON-INDUCED GTP-BINDING PROTEIN MX-RELATED"/>
    <property type="match status" value="1"/>
</dbReference>
<dbReference type="Pfam" id="PF01031">
    <property type="entry name" value="Dynamin_M"/>
    <property type="match status" value="1"/>
</dbReference>
<dbReference type="Pfam" id="PF00350">
    <property type="entry name" value="Dynamin_N"/>
    <property type="match status" value="1"/>
</dbReference>
<dbReference type="Pfam" id="PF02212">
    <property type="entry name" value="GED"/>
    <property type="match status" value="1"/>
</dbReference>
<dbReference type="PRINTS" id="PR00195">
    <property type="entry name" value="DYNAMIN"/>
</dbReference>
<dbReference type="SMART" id="SM00053">
    <property type="entry name" value="DYNc"/>
    <property type="match status" value="1"/>
</dbReference>
<dbReference type="SMART" id="SM00302">
    <property type="entry name" value="GED"/>
    <property type="match status" value="1"/>
</dbReference>
<dbReference type="SUPFAM" id="SSF52540">
    <property type="entry name" value="P-loop containing nucleoside triphosphate hydrolases"/>
    <property type="match status" value="1"/>
</dbReference>
<dbReference type="PROSITE" id="PS00410">
    <property type="entry name" value="G_DYNAMIN_1"/>
    <property type="match status" value="1"/>
</dbReference>
<dbReference type="PROSITE" id="PS51718">
    <property type="entry name" value="G_DYNAMIN_2"/>
    <property type="match status" value="1"/>
</dbReference>
<dbReference type="PROSITE" id="PS51388">
    <property type="entry name" value="GED"/>
    <property type="match status" value="1"/>
</dbReference>
<gene>
    <name type="primary">mx1</name>
    <name type="synonym">mx</name>
</gene>
<accession>Q91192</accession>
<keyword id="KW-0963">Cytoplasm</keyword>
<keyword id="KW-0342">GTP-binding</keyword>
<keyword id="KW-0547">Nucleotide-binding</keyword>
<name>MX1_ONCMY</name>
<proteinExistence type="evidence at transcript level"/>
<organism>
    <name type="scientific">Oncorhynchus mykiss</name>
    <name type="common">Rainbow trout</name>
    <name type="synonym">Salmo gairdneri</name>
    <dbReference type="NCBI Taxonomy" id="8022"/>
    <lineage>
        <taxon>Eukaryota</taxon>
        <taxon>Metazoa</taxon>
        <taxon>Chordata</taxon>
        <taxon>Craniata</taxon>
        <taxon>Vertebrata</taxon>
        <taxon>Euteleostomi</taxon>
        <taxon>Actinopterygii</taxon>
        <taxon>Neopterygii</taxon>
        <taxon>Teleostei</taxon>
        <taxon>Protacanthopterygii</taxon>
        <taxon>Salmoniformes</taxon>
        <taxon>Salmonidae</taxon>
        <taxon>Salmoninae</taxon>
        <taxon>Oncorhynchus</taxon>
    </lineage>
</organism>
<feature type="chain" id="PRO_0000206604" description="Interferon-induced GTP-binding protein Mx1">
    <location>
        <begin position="1"/>
        <end position="621"/>
    </location>
</feature>
<feature type="domain" description="Dynamin-type G" evidence="3">
    <location>
        <begin position="31"/>
        <end position="304"/>
    </location>
</feature>
<feature type="domain" description="GED" evidence="2">
    <location>
        <begin position="535"/>
        <end position="621"/>
    </location>
</feature>
<feature type="region of interest" description="G1 motif" evidence="3">
    <location>
        <begin position="41"/>
        <end position="48"/>
    </location>
</feature>
<feature type="region of interest" description="G2 motif" evidence="3">
    <location>
        <begin position="66"/>
        <end position="68"/>
    </location>
</feature>
<feature type="region of interest" description="G3 motif" evidence="3">
    <location>
        <begin position="142"/>
        <end position="145"/>
    </location>
</feature>
<feature type="region of interest" description="G4 motif" evidence="3">
    <location>
        <begin position="211"/>
        <end position="214"/>
    </location>
</feature>
<feature type="region of interest" description="G5 motif" evidence="3">
    <location>
        <begin position="243"/>
        <end position="246"/>
    </location>
</feature>
<feature type="binding site" evidence="1">
    <location>
        <begin position="41"/>
        <end position="48"/>
    </location>
    <ligand>
        <name>GTP</name>
        <dbReference type="ChEBI" id="CHEBI:37565"/>
    </ligand>
</feature>
<feature type="binding site" evidence="1">
    <location>
        <begin position="142"/>
        <end position="146"/>
    </location>
    <ligand>
        <name>GTP</name>
        <dbReference type="ChEBI" id="CHEBI:37565"/>
    </ligand>
</feature>
<feature type="binding site" evidence="1">
    <location>
        <begin position="211"/>
        <end position="214"/>
    </location>
    <ligand>
        <name>GTP</name>
        <dbReference type="ChEBI" id="CHEBI:37565"/>
    </ligand>
</feature>